<dbReference type="EC" id="2.4.2.10" evidence="1"/>
<dbReference type="EMBL" id="CP000312">
    <property type="protein sequence ID" value="ABG85428.1"/>
    <property type="molecule type" value="Genomic_DNA"/>
</dbReference>
<dbReference type="RefSeq" id="WP_003456665.1">
    <property type="nucleotide sequence ID" value="NZ_CAXVKH010000038.1"/>
</dbReference>
<dbReference type="SMR" id="Q0STN9"/>
<dbReference type="GeneID" id="93002302"/>
<dbReference type="KEGG" id="cpr:CPR_1196"/>
<dbReference type="UniPathway" id="UPA00070">
    <property type="reaction ID" value="UER00119"/>
</dbReference>
<dbReference type="Proteomes" id="UP000001824">
    <property type="component" value="Chromosome"/>
</dbReference>
<dbReference type="GO" id="GO:0000287">
    <property type="term" value="F:magnesium ion binding"/>
    <property type="evidence" value="ECO:0007669"/>
    <property type="project" value="UniProtKB-UniRule"/>
</dbReference>
<dbReference type="GO" id="GO:0004588">
    <property type="term" value="F:orotate phosphoribosyltransferase activity"/>
    <property type="evidence" value="ECO:0007669"/>
    <property type="project" value="UniProtKB-UniRule"/>
</dbReference>
<dbReference type="GO" id="GO:0044205">
    <property type="term" value="P:'de novo' UMP biosynthetic process"/>
    <property type="evidence" value="ECO:0007669"/>
    <property type="project" value="UniProtKB-UniRule"/>
</dbReference>
<dbReference type="GO" id="GO:0019856">
    <property type="term" value="P:pyrimidine nucleobase biosynthetic process"/>
    <property type="evidence" value="ECO:0007669"/>
    <property type="project" value="InterPro"/>
</dbReference>
<dbReference type="CDD" id="cd06223">
    <property type="entry name" value="PRTases_typeI"/>
    <property type="match status" value="1"/>
</dbReference>
<dbReference type="Gene3D" id="3.40.50.2020">
    <property type="match status" value="1"/>
</dbReference>
<dbReference type="HAMAP" id="MF_01208">
    <property type="entry name" value="PyrE"/>
    <property type="match status" value="1"/>
</dbReference>
<dbReference type="InterPro" id="IPR023031">
    <property type="entry name" value="OPRT"/>
</dbReference>
<dbReference type="InterPro" id="IPR006273">
    <property type="entry name" value="Orotate_PRibTrfase_bac"/>
</dbReference>
<dbReference type="InterPro" id="IPR000836">
    <property type="entry name" value="PRibTrfase_dom"/>
</dbReference>
<dbReference type="InterPro" id="IPR029057">
    <property type="entry name" value="PRTase-like"/>
</dbReference>
<dbReference type="NCBIfam" id="TIGR01367">
    <property type="entry name" value="pyrE_Therm"/>
    <property type="match status" value="1"/>
</dbReference>
<dbReference type="PANTHER" id="PTHR19278">
    <property type="entry name" value="OROTATE PHOSPHORIBOSYLTRANSFERASE"/>
    <property type="match status" value="1"/>
</dbReference>
<dbReference type="PANTHER" id="PTHR19278:SF9">
    <property type="entry name" value="URIDINE 5'-MONOPHOSPHATE SYNTHASE"/>
    <property type="match status" value="1"/>
</dbReference>
<dbReference type="Pfam" id="PF00156">
    <property type="entry name" value="Pribosyltran"/>
    <property type="match status" value="1"/>
</dbReference>
<dbReference type="SUPFAM" id="SSF53271">
    <property type="entry name" value="PRTase-like"/>
    <property type="match status" value="1"/>
</dbReference>
<evidence type="ECO:0000255" key="1">
    <source>
        <dbReference type="HAMAP-Rule" id="MF_01208"/>
    </source>
</evidence>
<comment type="function">
    <text evidence="1">Catalyzes the transfer of a ribosyl phosphate group from 5-phosphoribose 1-diphosphate to orotate, leading to the formation of orotidine monophosphate (OMP).</text>
</comment>
<comment type="catalytic activity">
    <reaction evidence="1">
        <text>orotidine 5'-phosphate + diphosphate = orotate + 5-phospho-alpha-D-ribose 1-diphosphate</text>
        <dbReference type="Rhea" id="RHEA:10380"/>
        <dbReference type="ChEBI" id="CHEBI:30839"/>
        <dbReference type="ChEBI" id="CHEBI:33019"/>
        <dbReference type="ChEBI" id="CHEBI:57538"/>
        <dbReference type="ChEBI" id="CHEBI:58017"/>
        <dbReference type="EC" id="2.4.2.10"/>
    </reaction>
</comment>
<comment type="cofactor">
    <cofactor evidence="1">
        <name>Mg(2+)</name>
        <dbReference type="ChEBI" id="CHEBI:18420"/>
    </cofactor>
</comment>
<comment type="pathway">
    <text evidence="1">Pyrimidine metabolism; UMP biosynthesis via de novo pathway; UMP from orotate: step 1/2.</text>
</comment>
<comment type="subunit">
    <text evidence="1">Homodimer.</text>
</comment>
<comment type="similarity">
    <text evidence="1">Belongs to the purine/pyrimidine phosphoribosyltransferase family. PyrE subfamily.</text>
</comment>
<accession>Q0STN9</accession>
<organism>
    <name type="scientific">Clostridium perfringens (strain SM101 / Type A)</name>
    <dbReference type="NCBI Taxonomy" id="289380"/>
    <lineage>
        <taxon>Bacteria</taxon>
        <taxon>Bacillati</taxon>
        <taxon>Bacillota</taxon>
        <taxon>Clostridia</taxon>
        <taxon>Eubacteriales</taxon>
        <taxon>Clostridiaceae</taxon>
        <taxon>Clostridium</taxon>
    </lineage>
</organism>
<proteinExistence type="inferred from homology"/>
<feature type="chain" id="PRO_1000066222" description="Orotate phosphoribosyltransferase">
    <location>
        <begin position="1"/>
        <end position="192"/>
    </location>
</feature>
<feature type="binding site" evidence="1">
    <location>
        <begin position="116"/>
        <end position="124"/>
    </location>
    <ligand>
        <name>5-phospho-alpha-D-ribose 1-diphosphate</name>
        <dbReference type="ChEBI" id="CHEBI:58017"/>
    </ligand>
</feature>
<feature type="binding site" evidence="1">
    <location>
        <position position="120"/>
    </location>
    <ligand>
        <name>orotate</name>
        <dbReference type="ChEBI" id="CHEBI:30839"/>
    </ligand>
</feature>
<feature type="binding site" evidence="1">
    <location>
        <position position="148"/>
    </location>
    <ligand>
        <name>orotate</name>
        <dbReference type="ChEBI" id="CHEBI:30839"/>
    </ligand>
</feature>
<sequence>MKNTDAMVIDTLKEVGALLEGHFLLSSGRHSNRYCQCAQLLKYPEKAEKVLKVVADQLKDIDFDLVVGPAMGGVIVAYELGRQLGKPAIFTERENGEMTLRRGFTIEKGQKVVITEDVVTTGKSFKEAAKVIEEQGGEVVAVVCIVDRTPGNVTDFPMYSSIKLDIESFEAENCPLCKEGVPYIKPGSRNIK</sequence>
<reference key="1">
    <citation type="journal article" date="2006" name="Genome Res.">
        <title>Skewed genomic variability in strains of the toxigenic bacterial pathogen, Clostridium perfringens.</title>
        <authorList>
            <person name="Myers G.S.A."/>
            <person name="Rasko D.A."/>
            <person name="Cheung J.K."/>
            <person name="Ravel J."/>
            <person name="Seshadri R."/>
            <person name="DeBoy R.T."/>
            <person name="Ren Q."/>
            <person name="Varga J."/>
            <person name="Awad M.M."/>
            <person name="Brinkac L.M."/>
            <person name="Daugherty S.C."/>
            <person name="Haft D.H."/>
            <person name="Dodson R.J."/>
            <person name="Madupu R."/>
            <person name="Nelson W.C."/>
            <person name="Rosovitz M.J."/>
            <person name="Sullivan S.A."/>
            <person name="Khouri H."/>
            <person name="Dimitrov G.I."/>
            <person name="Watkins K.L."/>
            <person name="Mulligan S."/>
            <person name="Benton J."/>
            <person name="Radune D."/>
            <person name="Fisher D.J."/>
            <person name="Atkins H.S."/>
            <person name="Hiscox T."/>
            <person name="Jost B.H."/>
            <person name="Billington S.J."/>
            <person name="Songer J.G."/>
            <person name="McClane B.A."/>
            <person name="Titball R.W."/>
            <person name="Rood J.I."/>
            <person name="Melville S.B."/>
            <person name="Paulsen I.T."/>
        </authorList>
    </citation>
    <scope>NUCLEOTIDE SEQUENCE [LARGE SCALE GENOMIC DNA]</scope>
    <source>
        <strain>SM101 / Type A</strain>
    </source>
</reference>
<name>PYRE_CLOPS</name>
<protein>
    <recommendedName>
        <fullName evidence="1">Orotate phosphoribosyltransferase</fullName>
        <shortName evidence="1">OPRT</shortName>
        <shortName evidence="1">OPRTase</shortName>
        <ecNumber evidence="1">2.4.2.10</ecNumber>
    </recommendedName>
</protein>
<gene>
    <name evidence="1" type="primary">pyrE</name>
    <name type="ordered locus">CPR_1196</name>
</gene>
<keyword id="KW-0328">Glycosyltransferase</keyword>
<keyword id="KW-0460">Magnesium</keyword>
<keyword id="KW-0665">Pyrimidine biosynthesis</keyword>
<keyword id="KW-0808">Transferase</keyword>